<keyword id="KW-0963">Cytoplasm</keyword>
<keyword id="KW-0521">NADP</keyword>
<keyword id="KW-0560">Oxidoreductase</keyword>
<keyword id="KW-0671">Queuosine biosynthesis</keyword>
<reference key="1">
    <citation type="journal article" date="2008" name="BMC Genomics">
        <title>Genome sequence and rapid evolution of the rice pathogen Xanthomonas oryzae pv. oryzae PXO99A.</title>
        <authorList>
            <person name="Salzberg S.L."/>
            <person name="Sommer D.D."/>
            <person name="Schatz M.C."/>
            <person name="Phillippy A.M."/>
            <person name="Rabinowicz P.D."/>
            <person name="Tsuge S."/>
            <person name="Furutani A."/>
            <person name="Ochiai H."/>
            <person name="Delcher A.L."/>
            <person name="Kelley D."/>
            <person name="Madupu R."/>
            <person name="Puiu D."/>
            <person name="Radune D."/>
            <person name="Shumway M."/>
            <person name="Trapnell C."/>
            <person name="Aparna G."/>
            <person name="Jha G."/>
            <person name="Pandey A."/>
            <person name="Patil P.B."/>
            <person name="Ishihara H."/>
            <person name="Meyer D.F."/>
            <person name="Szurek B."/>
            <person name="Verdier V."/>
            <person name="Koebnik R."/>
            <person name="Dow J.M."/>
            <person name="Ryan R.P."/>
            <person name="Hirata H."/>
            <person name="Tsuyumu S."/>
            <person name="Won Lee S."/>
            <person name="Seo Y.-S."/>
            <person name="Sriariyanum M."/>
            <person name="Ronald P.C."/>
            <person name="Sonti R.V."/>
            <person name="Van Sluys M.-A."/>
            <person name="Leach J.E."/>
            <person name="White F.F."/>
            <person name="Bogdanove A.J."/>
        </authorList>
    </citation>
    <scope>NUCLEOTIDE SEQUENCE [LARGE SCALE GENOMIC DNA]</scope>
    <source>
        <strain>PXO99A</strain>
    </source>
</reference>
<name>QUEF_XANOP</name>
<dbReference type="EC" id="1.7.1.13" evidence="1"/>
<dbReference type="EMBL" id="CP000967">
    <property type="protein sequence ID" value="ACD57263.1"/>
    <property type="molecule type" value="Genomic_DNA"/>
</dbReference>
<dbReference type="RefSeq" id="WP_011260517.1">
    <property type="nucleotide sequence ID" value="NC_010717.2"/>
</dbReference>
<dbReference type="SMR" id="B2SKC6"/>
<dbReference type="KEGG" id="xop:PXO_03986"/>
<dbReference type="eggNOG" id="COG0780">
    <property type="taxonomic scope" value="Bacteria"/>
</dbReference>
<dbReference type="eggNOG" id="COG2904">
    <property type="taxonomic scope" value="Bacteria"/>
</dbReference>
<dbReference type="HOGENOM" id="CLU_054738_0_0_6"/>
<dbReference type="UniPathway" id="UPA00392"/>
<dbReference type="Proteomes" id="UP000001740">
    <property type="component" value="Chromosome"/>
</dbReference>
<dbReference type="GO" id="GO:0005737">
    <property type="term" value="C:cytoplasm"/>
    <property type="evidence" value="ECO:0007669"/>
    <property type="project" value="UniProtKB-SubCell"/>
</dbReference>
<dbReference type="GO" id="GO:0033739">
    <property type="term" value="F:preQ1 synthase activity"/>
    <property type="evidence" value="ECO:0007669"/>
    <property type="project" value="UniProtKB-UniRule"/>
</dbReference>
<dbReference type="GO" id="GO:0008616">
    <property type="term" value="P:queuosine biosynthetic process"/>
    <property type="evidence" value="ECO:0007669"/>
    <property type="project" value="UniProtKB-UniRule"/>
</dbReference>
<dbReference type="GO" id="GO:0006400">
    <property type="term" value="P:tRNA modification"/>
    <property type="evidence" value="ECO:0007669"/>
    <property type="project" value="UniProtKB-UniRule"/>
</dbReference>
<dbReference type="Gene3D" id="3.30.1130.10">
    <property type="match status" value="2"/>
</dbReference>
<dbReference type="HAMAP" id="MF_00817">
    <property type="entry name" value="QueF_type2"/>
    <property type="match status" value="1"/>
</dbReference>
<dbReference type="InterPro" id="IPR043133">
    <property type="entry name" value="GTP-CH-I_C/QueF"/>
</dbReference>
<dbReference type="InterPro" id="IPR050084">
    <property type="entry name" value="NADPH_dep_7-cyano-7-deazaG_red"/>
</dbReference>
<dbReference type="InterPro" id="IPR029500">
    <property type="entry name" value="QueF"/>
</dbReference>
<dbReference type="InterPro" id="IPR029139">
    <property type="entry name" value="QueF_N"/>
</dbReference>
<dbReference type="InterPro" id="IPR016428">
    <property type="entry name" value="QueF_type2"/>
</dbReference>
<dbReference type="NCBIfam" id="TIGR03138">
    <property type="entry name" value="QueF"/>
    <property type="match status" value="1"/>
</dbReference>
<dbReference type="PANTHER" id="PTHR34354">
    <property type="entry name" value="NADPH-DEPENDENT 7-CYANO-7-DEAZAGUANINE REDUCTASE"/>
    <property type="match status" value="1"/>
</dbReference>
<dbReference type="PANTHER" id="PTHR34354:SF1">
    <property type="entry name" value="NADPH-DEPENDENT 7-CYANO-7-DEAZAGUANINE REDUCTASE"/>
    <property type="match status" value="1"/>
</dbReference>
<dbReference type="Pfam" id="PF14489">
    <property type="entry name" value="QueF"/>
    <property type="match status" value="1"/>
</dbReference>
<dbReference type="Pfam" id="PF14819">
    <property type="entry name" value="QueF_N"/>
    <property type="match status" value="1"/>
</dbReference>
<dbReference type="PIRSF" id="PIRSF004750">
    <property type="entry name" value="Nitrile_oxidored_YqcD_prd"/>
    <property type="match status" value="1"/>
</dbReference>
<dbReference type="SUPFAM" id="SSF55620">
    <property type="entry name" value="Tetrahydrobiopterin biosynthesis enzymes-like"/>
    <property type="match status" value="1"/>
</dbReference>
<protein>
    <recommendedName>
        <fullName evidence="1">NADPH-dependent 7-cyano-7-deazaguanine reductase</fullName>
        <ecNumber evidence="1">1.7.1.13</ecNumber>
    </recommendedName>
    <alternativeName>
        <fullName evidence="1">7-cyano-7-carbaguanine reductase</fullName>
    </alternativeName>
    <alternativeName>
        <fullName evidence="1">NADPH-dependent nitrile oxidoreductase</fullName>
    </alternativeName>
    <alternativeName>
        <fullName evidence="1">PreQ(0) reductase</fullName>
    </alternativeName>
</protein>
<comment type="function">
    <text evidence="1">Catalyzes the NADPH-dependent reduction of 7-cyano-7-deazaguanine (preQ0) to 7-aminomethyl-7-deazaguanine (preQ1).</text>
</comment>
<comment type="catalytic activity">
    <reaction evidence="1">
        <text>7-aminomethyl-7-carbaguanine + 2 NADP(+) = 7-cyano-7-deazaguanine + 2 NADPH + 3 H(+)</text>
        <dbReference type="Rhea" id="RHEA:13409"/>
        <dbReference type="ChEBI" id="CHEBI:15378"/>
        <dbReference type="ChEBI" id="CHEBI:45075"/>
        <dbReference type="ChEBI" id="CHEBI:57783"/>
        <dbReference type="ChEBI" id="CHEBI:58349"/>
        <dbReference type="ChEBI" id="CHEBI:58703"/>
        <dbReference type="EC" id="1.7.1.13"/>
    </reaction>
</comment>
<comment type="pathway">
    <text evidence="1">tRNA modification; tRNA-queuosine biosynthesis.</text>
</comment>
<comment type="subunit">
    <text evidence="1">Homodimer.</text>
</comment>
<comment type="subcellular location">
    <subcellularLocation>
        <location evidence="1">Cytoplasm</location>
    </subcellularLocation>
</comment>
<comment type="similarity">
    <text evidence="1">Belongs to the GTP cyclohydrolase I family. QueF type 2 subfamily.</text>
</comment>
<gene>
    <name evidence="1" type="primary">queF</name>
    <name type="ordered locus">PXO_03986</name>
</gene>
<evidence type="ECO:0000255" key="1">
    <source>
        <dbReference type="HAMAP-Rule" id="MF_00817"/>
    </source>
</evidence>
<sequence length="271" mass="29714">MNTPEDSTLGREVAYPSGYDPSLLFPIPRAAGREAIGLTGALPFTGRDRWHAYELSWLDAHGKPCVATATLHVPHDSPALIESKSLKLYLNSLNATRFNSAEAVRTRIVTDLSTRAGADVSVEFGLPPIDGVGDGESIDALDVSIDDYGPPNAAYLTAQAQPVVEEVLTSALLKSNCPVTGQPDWASVTLHYRGAPIEREGLLRYLVSFRDHAEFHEQCVERIFHDVLLRCAPEWLVVEARYTRRGGLDINPLRSSLSVPAPLSVFRDLRQ</sequence>
<organism>
    <name type="scientific">Xanthomonas oryzae pv. oryzae (strain PXO99A)</name>
    <dbReference type="NCBI Taxonomy" id="360094"/>
    <lineage>
        <taxon>Bacteria</taxon>
        <taxon>Pseudomonadati</taxon>
        <taxon>Pseudomonadota</taxon>
        <taxon>Gammaproteobacteria</taxon>
        <taxon>Lysobacterales</taxon>
        <taxon>Lysobacteraceae</taxon>
        <taxon>Xanthomonas</taxon>
    </lineage>
</organism>
<accession>B2SKC6</accession>
<proteinExistence type="inferred from homology"/>
<feature type="chain" id="PRO_1000134285" description="NADPH-dependent 7-cyano-7-deazaguanine reductase">
    <location>
        <begin position="1"/>
        <end position="271"/>
    </location>
</feature>
<feature type="active site" description="Thioimide intermediate" evidence="1">
    <location>
        <position position="177"/>
    </location>
</feature>
<feature type="active site" description="Proton donor" evidence="1">
    <location>
        <position position="184"/>
    </location>
</feature>
<feature type="binding site" evidence="1">
    <location>
        <begin position="81"/>
        <end position="83"/>
    </location>
    <ligand>
        <name>substrate</name>
    </ligand>
</feature>
<feature type="binding site" evidence="1">
    <location>
        <begin position="83"/>
        <end position="84"/>
    </location>
    <ligand>
        <name>NADPH</name>
        <dbReference type="ChEBI" id="CHEBI:57783"/>
    </ligand>
</feature>
<feature type="binding site" evidence="1">
    <location>
        <begin position="216"/>
        <end position="217"/>
    </location>
    <ligand>
        <name>substrate</name>
    </ligand>
</feature>
<feature type="binding site" evidence="1">
    <location>
        <begin position="245"/>
        <end position="246"/>
    </location>
    <ligand>
        <name>NADPH</name>
        <dbReference type="ChEBI" id="CHEBI:57783"/>
    </ligand>
</feature>